<sequence length="418" mass="47270">MNIFEELKARGLVFQTTDEQALVKALTEGQVSYYTGYDPTADSLHLGHLVAILTSRRLQLAGHKPYALVGGATGLIGDPSFKDAERSLQTKETVLEWSDKIKGQLSTFLDFENGDNKAELVNNYDWFSQISFIDFLRDVGKYFTVNYMMSKDSVKKRIETGISYTEFAYQIMQGYDFYELNDKHNVTLQIGGSDQWGNMTAGTELLRKKADKTGHVMTVPLITDSTGKKFGKSEGNAVWLDADKTSPYEMYQFWLNVMDDDAVRFLKIFTFLSLDEIAEIESEFNAARHERLAQKTLAREVVTLVHGEEAYKQALNITEQLFAGNIKNLSANELKQGLSNVPNYHVQSEDSLNLVDMLVTAGISPSKRQAREDVQNGAIYINGDRIQDLDYQLSNDDKIDDQLTVIRRGKKKYAVLTY</sequence>
<feature type="chain" id="PRO_0000234791" description="Tyrosine--tRNA ligase">
    <location>
        <begin position="1"/>
        <end position="418"/>
    </location>
</feature>
<feature type="domain" description="S4 RNA-binding" evidence="1">
    <location>
        <begin position="352"/>
        <end position="418"/>
    </location>
</feature>
<feature type="short sequence motif" description="'HIGH' region">
    <location>
        <begin position="39"/>
        <end position="48"/>
    </location>
</feature>
<feature type="short sequence motif" description="'KMSKS' region">
    <location>
        <begin position="229"/>
        <end position="233"/>
    </location>
</feature>
<feature type="binding site" evidence="1">
    <location>
        <position position="34"/>
    </location>
    <ligand>
        <name>L-tyrosine</name>
        <dbReference type="ChEBI" id="CHEBI:58315"/>
    </ligand>
</feature>
<feature type="binding site" evidence="1">
    <location>
        <position position="169"/>
    </location>
    <ligand>
        <name>L-tyrosine</name>
        <dbReference type="ChEBI" id="CHEBI:58315"/>
    </ligand>
</feature>
<feature type="binding site" evidence="1">
    <location>
        <position position="173"/>
    </location>
    <ligand>
        <name>L-tyrosine</name>
        <dbReference type="ChEBI" id="CHEBI:58315"/>
    </ligand>
</feature>
<feature type="binding site" evidence="1">
    <location>
        <position position="232"/>
    </location>
    <ligand>
        <name>ATP</name>
        <dbReference type="ChEBI" id="CHEBI:30616"/>
    </ligand>
</feature>
<dbReference type="EC" id="6.1.1.1" evidence="1"/>
<dbReference type="EMBL" id="AE009949">
    <property type="protein sequence ID" value="AAL96910.1"/>
    <property type="molecule type" value="Genomic_DNA"/>
</dbReference>
<dbReference type="RefSeq" id="WP_011017247.1">
    <property type="nucleotide sequence ID" value="NC_003485.1"/>
</dbReference>
<dbReference type="SMR" id="Q8P2Y5"/>
<dbReference type="KEGG" id="spm:spyM18_0096"/>
<dbReference type="HOGENOM" id="CLU_024003_0_3_9"/>
<dbReference type="GO" id="GO:0005829">
    <property type="term" value="C:cytosol"/>
    <property type="evidence" value="ECO:0007669"/>
    <property type="project" value="TreeGrafter"/>
</dbReference>
<dbReference type="GO" id="GO:0005524">
    <property type="term" value="F:ATP binding"/>
    <property type="evidence" value="ECO:0007669"/>
    <property type="project" value="UniProtKB-UniRule"/>
</dbReference>
<dbReference type="GO" id="GO:0003723">
    <property type="term" value="F:RNA binding"/>
    <property type="evidence" value="ECO:0007669"/>
    <property type="project" value="UniProtKB-KW"/>
</dbReference>
<dbReference type="GO" id="GO:0004831">
    <property type="term" value="F:tyrosine-tRNA ligase activity"/>
    <property type="evidence" value="ECO:0007669"/>
    <property type="project" value="UniProtKB-UniRule"/>
</dbReference>
<dbReference type="GO" id="GO:0006437">
    <property type="term" value="P:tyrosyl-tRNA aminoacylation"/>
    <property type="evidence" value="ECO:0007669"/>
    <property type="project" value="UniProtKB-UniRule"/>
</dbReference>
<dbReference type="CDD" id="cd00165">
    <property type="entry name" value="S4"/>
    <property type="match status" value="1"/>
</dbReference>
<dbReference type="CDD" id="cd00805">
    <property type="entry name" value="TyrRS_core"/>
    <property type="match status" value="1"/>
</dbReference>
<dbReference type="FunFam" id="1.10.240.10:FF:000001">
    <property type="entry name" value="Tyrosine--tRNA ligase"/>
    <property type="match status" value="1"/>
</dbReference>
<dbReference type="FunFam" id="3.40.50.620:FF:000008">
    <property type="entry name" value="Tyrosine--tRNA ligase"/>
    <property type="match status" value="1"/>
</dbReference>
<dbReference type="Gene3D" id="3.40.50.620">
    <property type="entry name" value="HUPs"/>
    <property type="match status" value="1"/>
</dbReference>
<dbReference type="Gene3D" id="3.10.290.10">
    <property type="entry name" value="RNA-binding S4 domain"/>
    <property type="match status" value="1"/>
</dbReference>
<dbReference type="Gene3D" id="1.10.240.10">
    <property type="entry name" value="Tyrosyl-Transfer RNA Synthetase"/>
    <property type="match status" value="1"/>
</dbReference>
<dbReference type="HAMAP" id="MF_02006">
    <property type="entry name" value="Tyr_tRNA_synth_type1"/>
    <property type="match status" value="1"/>
</dbReference>
<dbReference type="InterPro" id="IPR001412">
    <property type="entry name" value="aa-tRNA-synth_I_CS"/>
</dbReference>
<dbReference type="InterPro" id="IPR002305">
    <property type="entry name" value="aa-tRNA-synth_Ic"/>
</dbReference>
<dbReference type="InterPro" id="IPR014729">
    <property type="entry name" value="Rossmann-like_a/b/a_fold"/>
</dbReference>
<dbReference type="InterPro" id="IPR002942">
    <property type="entry name" value="S4_RNA-bd"/>
</dbReference>
<dbReference type="InterPro" id="IPR036986">
    <property type="entry name" value="S4_RNA-bd_sf"/>
</dbReference>
<dbReference type="InterPro" id="IPR054608">
    <property type="entry name" value="SYY-like_C"/>
</dbReference>
<dbReference type="InterPro" id="IPR002307">
    <property type="entry name" value="Tyr-tRNA-ligase"/>
</dbReference>
<dbReference type="InterPro" id="IPR024088">
    <property type="entry name" value="Tyr-tRNA-ligase_bac-type"/>
</dbReference>
<dbReference type="InterPro" id="IPR024107">
    <property type="entry name" value="Tyr-tRNA-ligase_bac_1"/>
</dbReference>
<dbReference type="NCBIfam" id="TIGR00234">
    <property type="entry name" value="tyrS"/>
    <property type="match status" value="1"/>
</dbReference>
<dbReference type="PANTHER" id="PTHR11766:SF0">
    <property type="entry name" value="TYROSINE--TRNA LIGASE, MITOCHONDRIAL"/>
    <property type="match status" value="1"/>
</dbReference>
<dbReference type="PANTHER" id="PTHR11766">
    <property type="entry name" value="TYROSYL-TRNA SYNTHETASE"/>
    <property type="match status" value="1"/>
</dbReference>
<dbReference type="Pfam" id="PF22421">
    <property type="entry name" value="SYY_C-terminal"/>
    <property type="match status" value="1"/>
</dbReference>
<dbReference type="Pfam" id="PF00579">
    <property type="entry name" value="tRNA-synt_1b"/>
    <property type="match status" value="1"/>
</dbReference>
<dbReference type="PRINTS" id="PR01040">
    <property type="entry name" value="TRNASYNTHTYR"/>
</dbReference>
<dbReference type="SMART" id="SM00363">
    <property type="entry name" value="S4"/>
    <property type="match status" value="1"/>
</dbReference>
<dbReference type="SUPFAM" id="SSF55174">
    <property type="entry name" value="Alpha-L RNA-binding motif"/>
    <property type="match status" value="1"/>
</dbReference>
<dbReference type="SUPFAM" id="SSF52374">
    <property type="entry name" value="Nucleotidylyl transferase"/>
    <property type="match status" value="1"/>
</dbReference>
<dbReference type="PROSITE" id="PS00178">
    <property type="entry name" value="AA_TRNA_LIGASE_I"/>
    <property type="match status" value="1"/>
</dbReference>
<dbReference type="PROSITE" id="PS50889">
    <property type="entry name" value="S4"/>
    <property type="match status" value="1"/>
</dbReference>
<accession>Q8P2Y5</accession>
<name>SYY_STRP8</name>
<protein>
    <recommendedName>
        <fullName evidence="1">Tyrosine--tRNA ligase</fullName>
        <ecNumber evidence="1">6.1.1.1</ecNumber>
    </recommendedName>
    <alternativeName>
        <fullName evidence="1">Tyrosyl-tRNA synthetase</fullName>
        <shortName evidence="1">TyrRS</shortName>
    </alternativeName>
</protein>
<comment type="function">
    <text evidence="1">Catalyzes the attachment of tyrosine to tRNA(Tyr) in a two-step reaction: tyrosine is first activated by ATP to form Tyr-AMP and then transferred to the acceptor end of tRNA(Tyr).</text>
</comment>
<comment type="catalytic activity">
    <reaction evidence="1">
        <text>tRNA(Tyr) + L-tyrosine + ATP = L-tyrosyl-tRNA(Tyr) + AMP + diphosphate + H(+)</text>
        <dbReference type="Rhea" id="RHEA:10220"/>
        <dbReference type="Rhea" id="RHEA-COMP:9706"/>
        <dbReference type="Rhea" id="RHEA-COMP:9707"/>
        <dbReference type="ChEBI" id="CHEBI:15378"/>
        <dbReference type="ChEBI" id="CHEBI:30616"/>
        <dbReference type="ChEBI" id="CHEBI:33019"/>
        <dbReference type="ChEBI" id="CHEBI:58315"/>
        <dbReference type="ChEBI" id="CHEBI:78442"/>
        <dbReference type="ChEBI" id="CHEBI:78536"/>
        <dbReference type="ChEBI" id="CHEBI:456215"/>
        <dbReference type="EC" id="6.1.1.1"/>
    </reaction>
</comment>
<comment type="subunit">
    <text evidence="1">Homodimer.</text>
</comment>
<comment type="subcellular location">
    <subcellularLocation>
        <location evidence="1">Cytoplasm</location>
    </subcellularLocation>
</comment>
<comment type="similarity">
    <text evidence="1">Belongs to the class-I aminoacyl-tRNA synthetase family. TyrS type 1 subfamily.</text>
</comment>
<organism>
    <name type="scientific">Streptococcus pyogenes serotype M18 (strain MGAS8232)</name>
    <dbReference type="NCBI Taxonomy" id="186103"/>
    <lineage>
        <taxon>Bacteria</taxon>
        <taxon>Bacillati</taxon>
        <taxon>Bacillota</taxon>
        <taxon>Bacilli</taxon>
        <taxon>Lactobacillales</taxon>
        <taxon>Streptococcaceae</taxon>
        <taxon>Streptococcus</taxon>
    </lineage>
</organism>
<reference key="1">
    <citation type="journal article" date="2002" name="Proc. Natl. Acad. Sci. U.S.A.">
        <title>Genome sequence and comparative microarray analysis of serotype M18 group A Streptococcus strains associated with acute rheumatic fever outbreaks.</title>
        <authorList>
            <person name="Smoot J.C."/>
            <person name="Barbian K.D."/>
            <person name="Van Gompel J.J."/>
            <person name="Smoot L.M."/>
            <person name="Chaussee M.S."/>
            <person name="Sylva G.L."/>
            <person name="Sturdevant D.E."/>
            <person name="Ricklefs S.M."/>
            <person name="Porcella S.F."/>
            <person name="Parkins L.D."/>
            <person name="Beres S.B."/>
            <person name="Campbell D.S."/>
            <person name="Smith T.M."/>
            <person name="Zhang Q."/>
            <person name="Kapur V."/>
            <person name="Daly J.A."/>
            <person name="Veasy L.G."/>
            <person name="Musser J.M."/>
        </authorList>
    </citation>
    <scope>NUCLEOTIDE SEQUENCE [LARGE SCALE GENOMIC DNA]</scope>
    <source>
        <strain>MGAS8232</strain>
    </source>
</reference>
<proteinExistence type="inferred from homology"/>
<keyword id="KW-0030">Aminoacyl-tRNA synthetase</keyword>
<keyword id="KW-0067">ATP-binding</keyword>
<keyword id="KW-0963">Cytoplasm</keyword>
<keyword id="KW-0436">Ligase</keyword>
<keyword id="KW-0547">Nucleotide-binding</keyword>
<keyword id="KW-0648">Protein biosynthesis</keyword>
<keyword id="KW-0694">RNA-binding</keyword>
<evidence type="ECO:0000255" key="1">
    <source>
        <dbReference type="HAMAP-Rule" id="MF_02006"/>
    </source>
</evidence>
<gene>
    <name evidence="1" type="primary">tyrS</name>
    <name type="ordered locus">spyM18_0096</name>
</gene>